<proteinExistence type="inferred from homology"/>
<dbReference type="EMBL" id="BX569689">
    <property type="protein sequence ID" value="CAE06717.1"/>
    <property type="molecule type" value="Genomic_DNA"/>
</dbReference>
<dbReference type="RefSeq" id="WP_011127078.1">
    <property type="nucleotide sequence ID" value="NC_005070.1"/>
</dbReference>
<dbReference type="SMR" id="Q7U9Q1"/>
<dbReference type="STRING" id="84588.SYNW0202"/>
<dbReference type="KEGG" id="syw:SYNW0202"/>
<dbReference type="eggNOG" id="ENOG5033AKP">
    <property type="taxonomic scope" value="Bacteria"/>
</dbReference>
<dbReference type="HOGENOM" id="CLU_214425_0_0_3"/>
<dbReference type="BioCyc" id="MetaCyc:TX72_RS01005-MONOMER"/>
<dbReference type="Proteomes" id="UP000001422">
    <property type="component" value="Chromosome"/>
</dbReference>
<dbReference type="GO" id="GO:0009539">
    <property type="term" value="C:photosystem II reaction center"/>
    <property type="evidence" value="ECO:0007669"/>
    <property type="project" value="InterPro"/>
</dbReference>
<dbReference type="GO" id="GO:0031676">
    <property type="term" value="C:plasma membrane-derived thylakoid membrane"/>
    <property type="evidence" value="ECO:0007669"/>
    <property type="project" value="UniProtKB-SubCell"/>
</dbReference>
<dbReference type="GO" id="GO:0015979">
    <property type="term" value="P:photosynthesis"/>
    <property type="evidence" value="ECO:0007669"/>
    <property type="project" value="UniProtKB-UniRule"/>
</dbReference>
<dbReference type="HAMAP" id="MF_01317">
    <property type="entry name" value="PSII_PsbL"/>
    <property type="match status" value="1"/>
</dbReference>
<dbReference type="InterPro" id="IPR003372">
    <property type="entry name" value="PSII_PsbL"/>
</dbReference>
<dbReference type="InterPro" id="IPR037266">
    <property type="entry name" value="PSII_PsbL_sf"/>
</dbReference>
<dbReference type="NCBIfam" id="NF001972">
    <property type="entry name" value="PRK00753.1"/>
    <property type="match status" value="1"/>
</dbReference>
<dbReference type="Pfam" id="PF02419">
    <property type="entry name" value="PsbL"/>
    <property type="match status" value="1"/>
</dbReference>
<dbReference type="SUPFAM" id="SSF161017">
    <property type="entry name" value="Photosystem II reaction center protein L, PsbL"/>
    <property type="match status" value="1"/>
</dbReference>
<protein>
    <recommendedName>
        <fullName evidence="1">Photosystem II reaction center protein L</fullName>
        <shortName evidence="1">PSII-L</shortName>
    </recommendedName>
</protein>
<evidence type="ECO:0000255" key="1">
    <source>
        <dbReference type="HAMAP-Rule" id="MF_01317"/>
    </source>
</evidence>
<accession>Q7U9Q1</accession>
<name>PSBL_PARMW</name>
<reference key="1">
    <citation type="journal article" date="2003" name="Nature">
        <title>The genome of a motile marine Synechococcus.</title>
        <authorList>
            <person name="Palenik B."/>
            <person name="Brahamsha B."/>
            <person name="Larimer F.W."/>
            <person name="Land M.L."/>
            <person name="Hauser L."/>
            <person name="Chain P."/>
            <person name="Lamerdin J.E."/>
            <person name="Regala W."/>
            <person name="Allen E.E."/>
            <person name="McCarren J."/>
            <person name="Paulsen I.T."/>
            <person name="Dufresne A."/>
            <person name="Partensky F."/>
            <person name="Webb E.A."/>
            <person name="Waterbury J."/>
        </authorList>
    </citation>
    <scope>NUCLEOTIDE SEQUENCE [LARGE SCALE GENOMIC DNA]</scope>
    <source>
        <strain>WH8102</strain>
    </source>
</reference>
<keyword id="KW-0472">Membrane</keyword>
<keyword id="KW-0602">Photosynthesis</keyword>
<keyword id="KW-0604">Photosystem II</keyword>
<keyword id="KW-0674">Reaction center</keyword>
<keyword id="KW-0793">Thylakoid</keyword>
<keyword id="KW-0812">Transmembrane</keyword>
<keyword id="KW-1133">Transmembrane helix</keyword>
<organism>
    <name type="scientific">Parasynechococcus marenigrum (strain WH8102)</name>
    <dbReference type="NCBI Taxonomy" id="84588"/>
    <lineage>
        <taxon>Bacteria</taxon>
        <taxon>Bacillati</taxon>
        <taxon>Cyanobacteriota</taxon>
        <taxon>Cyanophyceae</taxon>
        <taxon>Synechococcales</taxon>
        <taxon>Prochlorococcaceae</taxon>
        <taxon>Parasynechococcus</taxon>
        <taxon>Parasynechococcus marenigrum</taxon>
    </lineage>
</organism>
<feature type="chain" id="PRO_0000219793" description="Photosystem II reaction center protein L">
    <location>
        <begin position="1"/>
        <end position="39"/>
    </location>
</feature>
<feature type="transmembrane region" description="Helical" evidence="1">
    <location>
        <begin position="18"/>
        <end position="38"/>
    </location>
</feature>
<comment type="function">
    <text evidence="1">One of the components of the core complex of photosystem II (PSII). PSII is a light-driven water:plastoquinone oxidoreductase that uses light energy to abstract electrons from H(2)O, generating O(2) and a proton gradient subsequently used for ATP formation. It consists of a core antenna complex that captures photons, and an electron transfer chain that converts photonic excitation into a charge separation. This subunit is found at the monomer-monomer interface and is required for correct PSII assembly and/or dimerization.</text>
</comment>
<comment type="subunit">
    <text evidence="1">PSII is composed of 1 copy each of membrane proteins PsbA, PsbB, PsbC, PsbD, PsbE, PsbF, PsbH, PsbI, PsbJ, PsbK, PsbL, PsbM, PsbT, PsbX, PsbY, PsbZ, Psb30/Ycf12, peripheral proteins PsbO, CyanoQ (PsbQ), PsbU, PsbV and a large number of cofactors. It forms dimeric complexes.</text>
</comment>
<comment type="subcellular location">
    <subcellularLocation>
        <location evidence="1">Cellular thylakoid membrane</location>
        <topology evidence="1">Single-pass membrane protein</topology>
    </subcellularLocation>
</comment>
<comment type="similarity">
    <text evidence="1">Belongs to the PsbL family.</text>
</comment>
<gene>
    <name evidence="1" type="primary">psbL</name>
    <name type="ordered locus">SYNW0202</name>
</gene>
<sequence>MQRNPNPNNLPVELNRTSLYLGLLFVFVTGVLMSSYFFN</sequence>